<dbReference type="EMBL" id="AB000817">
    <property type="protein sequence ID" value="BAA76293.2"/>
    <property type="molecule type" value="mRNA"/>
</dbReference>
<dbReference type="EMBL" id="AB014074">
    <property type="protein sequence ID" value="BAA76295.1"/>
    <property type="molecule type" value="mRNA"/>
</dbReference>
<dbReference type="RefSeq" id="NP_059004.1">
    <molecule id="Q9WTL3-1"/>
    <property type="nucleotide sequence ID" value="NM_017308.1"/>
</dbReference>
<dbReference type="RefSeq" id="XP_006232920.1">
    <molecule id="Q9WTL3-1"/>
    <property type="nucleotide sequence ID" value="XM_006232858.5"/>
</dbReference>
<dbReference type="RefSeq" id="XP_006232923.1">
    <molecule id="Q9WTL3-1"/>
    <property type="nucleotide sequence ID" value="XM_006232861.5"/>
</dbReference>
<dbReference type="RefSeq" id="XP_008759512.1">
    <property type="nucleotide sequence ID" value="XM_008761290.2"/>
</dbReference>
<dbReference type="RefSeq" id="XP_008759515.1">
    <molecule id="Q9WTL3-1"/>
    <property type="nucleotide sequence ID" value="XM_008761293.4"/>
</dbReference>
<dbReference type="RefSeq" id="XP_017446288.1">
    <property type="nucleotide sequence ID" value="XM_017590799.1"/>
</dbReference>
<dbReference type="RefSeq" id="XP_017446289.1">
    <molecule id="Q9WTL3-1"/>
    <property type="nucleotide sequence ID" value="XM_017590800.3"/>
</dbReference>
<dbReference type="RefSeq" id="XP_017446290.1">
    <property type="nucleotide sequence ID" value="XM_017590801.1"/>
</dbReference>
<dbReference type="RefSeq" id="XP_017446291.1">
    <molecule id="Q9WTL3-1"/>
    <property type="nucleotide sequence ID" value="XM_017590802.3"/>
</dbReference>
<dbReference type="RefSeq" id="XP_017446292.1">
    <property type="nucleotide sequence ID" value="XM_017590803.1"/>
</dbReference>
<dbReference type="RefSeq" id="XP_017446293.1">
    <molecule id="Q9WTL3-1"/>
    <property type="nucleotide sequence ID" value="XM_017590804.3"/>
</dbReference>
<dbReference type="RefSeq" id="XP_017446294.1">
    <property type="nucleotide sequence ID" value="XM_017590805.1"/>
</dbReference>
<dbReference type="RefSeq" id="XP_017446295.1">
    <molecule id="Q9WTL3-1"/>
    <property type="nucleotide sequence ID" value="XM_017590806.3"/>
</dbReference>
<dbReference type="RefSeq" id="XP_017446296.1">
    <molecule id="Q9WTL3-1"/>
    <property type="nucleotide sequence ID" value="XM_017590807.3"/>
</dbReference>
<dbReference type="RefSeq" id="XP_017446297.1">
    <molecule id="Q9WTL3-1"/>
    <property type="nucleotide sequence ID" value="XM_017590808.3"/>
</dbReference>
<dbReference type="RefSeq" id="XP_017446298.1">
    <molecule id="Q9WTL3-1"/>
    <property type="nucleotide sequence ID" value="XM_017590809.3"/>
</dbReference>
<dbReference type="RefSeq" id="XP_017446299.1">
    <property type="nucleotide sequence ID" value="XM_017590810.1"/>
</dbReference>
<dbReference type="RefSeq" id="XP_038958054.1">
    <molecule id="Q9WTL3-1"/>
    <property type="nucleotide sequence ID" value="XM_039102126.2"/>
</dbReference>
<dbReference type="RefSeq" id="XP_038958056.1">
    <molecule id="Q9WTL3-1"/>
    <property type="nucleotide sequence ID" value="XM_039102128.2"/>
</dbReference>
<dbReference type="RefSeq" id="XP_063137751.1">
    <molecule id="Q9WTL3-2"/>
    <property type="nucleotide sequence ID" value="XM_063281681.1"/>
</dbReference>
<dbReference type="SMR" id="Q9WTL3"/>
<dbReference type="FunCoup" id="Q9WTL3">
    <property type="interactions" value="496"/>
</dbReference>
<dbReference type="STRING" id="10116.ENSRNOP00000050221"/>
<dbReference type="GlyCosmos" id="Q9WTL3">
    <property type="glycosylation" value="3 sites, No reported glycans"/>
</dbReference>
<dbReference type="GlyGen" id="Q9WTL3">
    <property type="glycosylation" value="4 sites"/>
</dbReference>
<dbReference type="iPTMnet" id="Q9WTL3"/>
<dbReference type="PhosphoSitePlus" id="Q9WTL3"/>
<dbReference type="PaxDb" id="10116-ENSRNOP00000050221"/>
<dbReference type="Ensembl" id="ENSRNOT00000028645.6">
    <molecule id="Q9WTL3-2"/>
    <property type="protein sequence ID" value="ENSRNOP00000028645.4"/>
    <property type="gene ID" value="ENSRNOG00000021101.8"/>
</dbReference>
<dbReference type="Ensembl" id="ENSRNOT00000050914.4">
    <molecule id="Q9WTL3-1"/>
    <property type="protein sequence ID" value="ENSRNOP00000050221.1"/>
    <property type="gene ID" value="ENSRNOG00000021101.8"/>
</dbReference>
<dbReference type="GeneID" id="29744"/>
<dbReference type="KEGG" id="rno:29744"/>
<dbReference type="UCSC" id="RGD:3659">
    <molecule id="Q9WTL3-1"/>
    <property type="organism name" value="rat"/>
</dbReference>
<dbReference type="AGR" id="RGD:3659"/>
<dbReference type="CTD" id="10500"/>
<dbReference type="RGD" id="3659">
    <property type="gene designation" value="Sema6c"/>
</dbReference>
<dbReference type="eggNOG" id="KOG3611">
    <property type="taxonomic scope" value="Eukaryota"/>
</dbReference>
<dbReference type="GeneTree" id="ENSGT00940000158641"/>
<dbReference type="HOGENOM" id="CLU_009051_2_1_1"/>
<dbReference type="InParanoid" id="Q9WTL3"/>
<dbReference type="OMA" id="DMKNCAM"/>
<dbReference type="OrthoDB" id="9988752at2759"/>
<dbReference type="PhylomeDB" id="Q9WTL3"/>
<dbReference type="TreeFam" id="TF316102"/>
<dbReference type="PRO" id="PR:Q9WTL3"/>
<dbReference type="Proteomes" id="UP000002494">
    <property type="component" value="Chromosome 2"/>
</dbReference>
<dbReference type="Bgee" id="ENSRNOG00000021101">
    <property type="expression patterns" value="Expressed in skeletal muscle tissue and 18 other cell types or tissues"/>
</dbReference>
<dbReference type="ExpressionAtlas" id="Q9WTL3">
    <property type="expression patterns" value="baseline and differential"/>
</dbReference>
<dbReference type="GO" id="GO:0005737">
    <property type="term" value="C:cytoplasm"/>
    <property type="evidence" value="ECO:0000266"/>
    <property type="project" value="RGD"/>
</dbReference>
<dbReference type="GO" id="GO:0005886">
    <property type="term" value="C:plasma membrane"/>
    <property type="evidence" value="ECO:0000318"/>
    <property type="project" value="GO_Central"/>
</dbReference>
<dbReference type="GO" id="GO:0045499">
    <property type="term" value="F:chemorepellent activity"/>
    <property type="evidence" value="ECO:0000318"/>
    <property type="project" value="GO_Central"/>
</dbReference>
<dbReference type="GO" id="GO:0030215">
    <property type="term" value="F:semaphorin receptor binding"/>
    <property type="evidence" value="ECO:0000266"/>
    <property type="project" value="RGD"/>
</dbReference>
<dbReference type="GO" id="GO:0007411">
    <property type="term" value="P:axon guidance"/>
    <property type="evidence" value="ECO:0000314"/>
    <property type="project" value="RGD"/>
</dbReference>
<dbReference type="GO" id="GO:0001755">
    <property type="term" value="P:neural crest cell migration"/>
    <property type="evidence" value="ECO:0000318"/>
    <property type="project" value="GO_Central"/>
</dbReference>
<dbReference type="GO" id="GO:0030335">
    <property type="term" value="P:positive regulation of cell migration"/>
    <property type="evidence" value="ECO:0000318"/>
    <property type="project" value="GO_Central"/>
</dbReference>
<dbReference type="GO" id="GO:0071526">
    <property type="term" value="P:semaphorin-plexin signaling pathway"/>
    <property type="evidence" value="ECO:0000318"/>
    <property type="project" value="GO_Central"/>
</dbReference>
<dbReference type="FunFam" id="2.130.10.10:FF:000184">
    <property type="entry name" value="semaphorin-6C isoform X1"/>
    <property type="match status" value="1"/>
</dbReference>
<dbReference type="FunFam" id="3.30.1680.10:FF:000015">
    <property type="entry name" value="semaphorin-6C isoform X1"/>
    <property type="match status" value="1"/>
</dbReference>
<dbReference type="Gene3D" id="3.30.1680.10">
    <property type="entry name" value="ligand-binding face of the semaphorins, domain 2"/>
    <property type="match status" value="1"/>
</dbReference>
<dbReference type="Gene3D" id="2.130.10.10">
    <property type="entry name" value="YVTN repeat-like/Quinoprotein amine dehydrogenase"/>
    <property type="match status" value="1"/>
</dbReference>
<dbReference type="InterPro" id="IPR001627">
    <property type="entry name" value="Semap_dom"/>
</dbReference>
<dbReference type="InterPro" id="IPR036352">
    <property type="entry name" value="Semap_dom_sf"/>
</dbReference>
<dbReference type="InterPro" id="IPR027231">
    <property type="entry name" value="Semaphorin"/>
</dbReference>
<dbReference type="InterPro" id="IPR015943">
    <property type="entry name" value="WD40/YVTN_repeat-like_dom_sf"/>
</dbReference>
<dbReference type="PANTHER" id="PTHR11036">
    <property type="entry name" value="SEMAPHORIN"/>
    <property type="match status" value="1"/>
</dbReference>
<dbReference type="PANTHER" id="PTHR11036:SF11">
    <property type="entry name" value="SEMAPHORIN-6C"/>
    <property type="match status" value="1"/>
</dbReference>
<dbReference type="Pfam" id="PF01403">
    <property type="entry name" value="Sema"/>
    <property type="match status" value="1"/>
</dbReference>
<dbReference type="SMART" id="SM00630">
    <property type="entry name" value="Sema"/>
    <property type="match status" value="1"/>
</dbReference>
<dbReference type="SUPFAM" id="SSF103575">
    <property type="entry name" value="Plexin repeat"/>
    <property type="match status" value="1"/>
</dbReference>
<dbReference type="SUPFAM" id="SSF101912">
    <property type="entry name" value="Sema domain"/>
    <property type="match status" value="1"/>
</dbReference>
<dbReference type="PROSITE" id="PS51004">
    <property type="entry name" value="SEMA"/>
    <property type="match status" value="1"/>
</dbReference>
<proteinExistence type="evidence at transcript level"/>
<sequence length="960" mass="102610">MPRAPHSMPLLLLLLLSLPQAQTAFPQDPIPLLTSDLQGTSPSSWFRGLEDDAVAAELGLDFQRFLTLNRTLLVAARDHVFSFDLQAQEEGEGLVPNKFLTWRSQDMENCAVRGKLTDECYNYIRVLVPWDSQTLLACGTNSFSPVCRSYGITSLQQEGEELSGQARCPFDATQSTVAISAEGSLYSATAADFQASDAVVYRSLGPQPPLRSAKYDSKWLREPHFVYALEHGDHVYFFFREVSVEDARLGRVQFSRVARVCKRDMGGSPRALDRHWTSFLKLRLNCSVPGDSTFYFDVLQSLTGPVNLHGRSALFGVFTTQTNSIPGSAVCAFYLDDIERGFEGKFKEQRSLDGAWTPVSEDKVPSPRPGSCAGVGAAALFSSSQDLPDDVLLFIKAHPLLDPAVPPATHQPLLTLTSRALLTQVAVDGMAGPHRNTTVLFLGSNDGTVLKVLPPGGQSLGPEPIILEEIDAYSHARCSGKRSPRAARRIIGLELDTEGHRLFVAFPGCIVYLSLSRCARHGACQRSCLASLDPYCGWHRFRGCVNIRGPGGTDVDLTGNQESMEHGDCQDGATGSQSGPGDSAYVLLGPGPSPETPSSPSDAHPGPQSSTLGAHTQGVRRDLSPASASRSIPIPLLLACVAAAFALGASVSGLLVSCACRRANRRRSKDIETPGLPRPLSLRSLARLHGGGPEPPPPPKDGDAAQTPQLYTTFLPPPEGGSPPELACLPTPETTPELPVKHLRASGGPWEWNQNGNNASEGPGRPRGCSAAGGPAPRVLVRPPPPGCPGQEVEVTTLEELLRYLHGPQPPRKGSEPLASAPFTSRPPASEPGAALFVDSSPMPRDCVPPLRLDVPPDGKRAAPSGRPALSAPAPRLGVSGSRRLPFPTHRAPPGLLTRVPSGGPSRYSGGPGRHLLYLGRPDGHRGRSLKRVDVKSPLSPKPPLATPPQPAPHGSHFNF</sequence>
<organism>
    <name type="scientific">Rattus norvegicus</name>
    <name type="common">Rat</name>
    <dbReference type="NCBI Taxonomy" id="10116"/>
    <lineage>
        <taxon>Eukaryota</taxon>
        <taxon>Metazoa</taxon>
        <taxon>Chordata</taxon>
        <taxon>Craniata</taxon>
        <taxon>Vertebrata</taxon>
        <taxon>Euteleostomi</taxon>
        <taxon>Mammalia</taxon>
        <taxon>Eutheria</taxon>
        <taxon>Euarchontoglires</taxon>
        <taxon>Glires</taxon>
        <taxon>Rodentia</taxon>
        <taxon>Myomorpha</taxon>
        <taxon>Muroidea</taxon>
        <taxon>Muridae</taxon>
        <taxon>Murinae</taxon>
        <taxon>Rattus</taxon>
    </lineage>
</organism>
<protein>
    <recommendedName>
        <fullName>Semaphorin-6C</fullName>
    </recommendedName>
    <alternativeName>
        <fullName>Semaphorin-Y</fullName>
        <shortName>Sema Y</shortName>
    </alternativeName>
</protein>
<feature type="signal peptide" evidence="1">
    <location>
        <begin position="1"/>
        <end position="23"/>
    </location>
</feature>
<feature type="chain" id="PRO_0000032346" description="Semaphorin-6C">
    <location>
        <begin position="24"/>
        <end position="960"/>
    </location>
</feature>
<feature type="topological domain" description="Extracellular" evidence="1">
    <location>
        <begin position="24"/>
        <end position="635"/>
    </location>
</feature>
<feature type="transmembrane region" description="Helical" evidence="1">
    <location>
        <begin position="636"/>
        <end position="656"/>
    </location>
</feature>
<feature type="topological domain" description="Cytoplasmic" evidence="1">
    <location>
        <begin position="657"/>
        <end position="960"/>
    </location>
</feature>
<feature type="domain" description="Sema" evidence="2">
    <location>
        <begin position="29"/>
        <end position="515"/>
    </location>
</feature>
<feature type="region of interest" description="Disordered" evidence="3">
    <location>
        <begin position="555"/>
        <end position="624"/>
    </location>
</feature>
<feature type="region of interest" description="Disordered" evidence="3">
    <location>
        <begin position="685"/>
        <end position="725"/>
    </location>
</feature>
<feature type="region of interest" description="Disordered" evidence="3">
    <location>
        <begin position="745"/>
        <end position="792"/>
    </location>
</feature>
<feature type="region of interest" description="Disordered" evidence="3">
    <location>
        <begin position="806"/>
        <end position="960"/>
    </location>
</feature>
<feature type="compositionally biased region" description="Low complexity" evidence="3">
    <location>
        <begin position="899"/>
        <end position="909"/>
    </location>
</feature>
<feature type="compositionally biased region" description="Basic and acidic residues" evidence="3">
    <location>
        <begin position="922"/>
        <end position="935"/>
    </location>
</feature>
<feature type="compositionally biased region" description="Pro residues" evidence="3">
    <location>
        <begin position="940"/>
        <end position="952"/>
    </location>
</feature>
<feature type="glycosylation site" description="N-linked (GlcNAc...) asparagine" evidence="1">
    <location>
        <position position="69"/>
    </location>
</feature>
<feature type="glycosylation site" description="N-linked (GlcNAc...) asparagine" evidence="1">
    <location>
        <position position="285"/>
    </location>
</feature>
<feature type="glycosylation site" description="N-linked (GlcNAc...) asparagine" evidence="1">
    <location>
        <position position="436"/>
    </location>
</feature>
<feature type="disulfide bond" evidence="2">
    <location>
        <begin position="110"/>
        <end position="120"/>
    </location>
</feature>
<feature type="disulfide bond" evidence="2">
    <location>
        <begin position="138"/>
        <end position="147"/>
    </location>
</feature>
<feature type="disulfide bond" evidence="2">
    <location>
        <begin position="261"/>
        <end position="372"/>
    </location>
</feature>
<feature type="disulfide bond" evidence="2">
    <location>
        <begin position="286"/>
        <end position="331"/>
    </location>
</feature>
<feature type="disulfide bond" evidence="2">
    <location>
        <begin position="478"/>
        <end position="509"/>
    </location>
</feature>
<feature type="disulfide bond" evidence="2">
    <location>
        <begin position="518"/>
        <end position="536"/>
    </location>
</feature>
<feature type="disulfide bond" evidence="2">
    <location>
        <begin position="524"/>
        <end position="569"/>
    </location>
</feature>
<feature type="disulfide bond" evidence="2">
    <location>
        <begin position="528"/>
        <end position="544"/>
    </location>
</feature>
<feature type="splice variant" id="VSP_006048" description="In isoform Sema Y-S." evidence="5">
    <location>
        <begin position="586"/>
        <end position="617"/>
    </location>
</feature>
<gene>
    <name type="primary">Sema6c</name>
    <name type="synonym">Semay</name>
</gene>
<name>SEM6C_RAT</name>
<reference key="1">
    <citation type="journal article" date="1999" name="Mol. Cell. Neurosci.">
        <title>Cloning and characterization of a novel class VI semaphorin, semaphorin Y.</title>
        <authorList>
            <person name="Kikuchi K."/>
            <person name="Chedotal A."/>
            <person name="Hanafusa H."/>
            <person name="Ujimasa Y."/>
            <person name="de Castro F."/>
            <person name="Goodman C.S."/>
            <person name="Kimura T."/>
        </authorList>
    </citation>
    <scope>NUCLEOTIDE SEQUENCE [MRNA] (ISOFORMS SEMA Y-L AND SEMA Y-S)</scope>
    <scope>FUNCTION</scope>
    <source>
        <strain>Sprague-Dawley</strain>
        <tissue>Muscle</tissue>
    </source>
</reference>
<evidence type="ECO:0000255" key="1"/>
<evidence type="ECO:0000255" key="2">
    <source>
        <dbReference type="PROSITE-ProRule" id="PRU00352"/>
    </source>
</evidence>
<evidence type="ECO:0000256" key="3">
    <source>
        <dbReference type="SAM" id="MobiDB-lite"/>
    </source>
</evidence>
<evidence type="ECO:0000269" key="4">
    <source>
    </source>
</evidence>
<evidence type="ECO:0000303" key="5">
    <source>
    </source>
</evidence>
<evidence type="ECO:0000305" key="6"/>
<accession>Q9WTL3</accession>
<accession>Q9WTM6</accession>
<comment type="function">
    <text evidence="4">Shows growth cone collapsing activity on dorsal root ganglion (DRG) neurons in vitro. May be a stop signal for the DRG neurons in their target areas, and possibly also for other neurons. May also be involved in the maintenance and remodeling of neuronal connections.</text>
</comment>
<comment type="subcellular location">
    <subcellularLocation>
        <location>Cell membrane</location>
        <topology>Single-pass type I membrane protein</topology>
    </subcellularLocation>
</comment>
<comment type="alternative products">
    <event type="alternative splicing"/>
    <isoform>
        <id>Q9WTL3-1</id>
        <name>Sema Y-L</name>
        <sequence type="displayed"/>
    </isoform>
    <isoform>
        <id>Q9WTL3-2</id>
        <name>Sema Y-S</name>
        <sequence type="described" ref="VSP_006048"/>
    </isoform>
</comment>
<comment type="tissue specificity">
    <text>Expressed in many regions of the developing nervous system, probably in neurons and their precursors, but also in nonneural tissue such as immature muscle and dermis. In adult, strong expression in the skeletal muscle and moderate expression in the brain, where cerebellum shows the highest expression. Also expressed in almost all areas of the CNS.</text>
</comment>
<comment type="developmental stage">
    <text>Detected at 12 dpc and found at markedly increased levels at 15 dpc and 18 dpc in both the head and the body. At birth the level decreases significantly.</text>
</comment>
<comment type="similarity">
    <text evidence="6">Belongs to the semaphorin family.</text>
</comment>
<keyword id="KW-0025">Alternative splicing</keyword>
<keyword id="KW-1003">Cell membrane</keyword>
<keyword id="KW-0217">Developmental protein</keyword>
<keyword id="KW-0221">Differentiation</keyword>
<keyword id="KW-1015">Disulfide bond</keyword>
<keyword id="KW-0325">Glycoprotein</keyword>
<keyword id="KW-0472">Membrane</keyword>
<keyword id="KW-0524">Neurogenesis</keyword>
<keyword id="KW-1185">Reference proteome</keyword>
<keyword id="KW-0732">Signal</keyword>
<keyword id="KW-0812">Transmembrane</keyword>
<keyword id="KW-1133">Transmembrane helix</keyword>